<protein>
    <recommendedName>
        <fullName evidence="6">Importin subunit alpha-7</fullName>
        <shortName evidence="5">IMPa-7</shortName>
    </recommendedName>
</protein>
<dbReference type="EMBL" id="AC011620">
    <property type="protein sequence ID" value="AAF26125.1"/>
    <property type="molecule type" value="Genomic_DNA"/>
</dbReference>
<dbReference type="EMBL" id="CP002686">
    <property type="protein sequence ID" value="AEE74284.1"/>
    <property type="molecule type" value="Genomic_DNA"/>
</dbReference>
<dbReference type="EMBL" id="CP002686">
    <property type="protein sequence ID" value="ANM65374.1"/>
    <property type="molecule type" value="Genomic_DNA"/>
</dbReference>
<dbReference type="EMBL" id="DQ446636">
    <property type="protein sequence ID" value="ABE65918.1"/>
    <property type="molecule type" value="mRNA"/>
</dbReference>
<dbReference type="RefSeq" id="NP_001319482.1">
    <property type="nucleotide sequence ID" value="NM_001337604.1"/>
</dbReference>
<dbReference type="RefSeq" id="NP_187223.1">
    <property type="nucleotide sequence ID" value="NM_111446.2"/>
</dbReference>
<dbReference type="SMR" id="Q9M9X7"/>
<dbReference type="FunCoup" id="Q9M9X7">
    <property type="interactions" value="3152"/>
</dbReference>
<dbReference type="STRING" id="3702.Q9M9X7"/>
<dbReference type="iPTMnet" id="Q9M9X7"/>
<dbReference type="PaxDb" id="3702-AT3G05720.1"/>
<dbReference type="ProteomicsDB" id="248540"/>
<dbReference type="EnsemblPlants" id="AT3G05720.1">
    <property type="protein sequence ID" value="AT3G05720.1"/>
    <property type="gene ID" value="AT3G05720"/>
</dbReference>
<dbReference type="EnsemblPlants" id="AT3G05720.2">
    <property type="protein sequence ID" value="AT3G05720.2"/>
    <property type="gene ID" value="AT3G05720"/>
</dbReference>
<dbReference type="GeneID" id="819741"/>
<dbReference type="Gramene" id="AT3G05720.1">
    <property type="protein sequence ID" value="AT3G05720.1"/>
    <property type="gene ID" value="AT3G05720"/>
</dbReference>
<dbReference type="Gramene" id="AT3G05720.2">
    <property type="protein sequence ID" value="AT3G05720.2"/>
    <property type="gene ID" value="AT3G05720"/>
</dbReference>
<dbReference type="KEGG" id="ath:AT3G05720"/>
<dbReference type="Araport" id="AT3G05720"/>
<dbReference type="TAIR" id="AT3G05720">
    <property type="gene designation" value="IMPA-7"/>
</dbReference>
<dbReference type="eggNOG" id="KOG0166">
    <property type="taxonomic scope" value="Eukaryota"/>
</dbReference>
<dbReference type="HOGENOM" id="CLU_018084_6_0_1"/>
<dbReference type="InParanoid" id="Q9M9X7"/>
<dbReference type="OMA" id="VFDADIC"/>
<dbReference type="PhylomeDB" id="Q9M9X7"/>
<dbReference type="PRO" id="PR:Q9M9X7"/>
<dbReference type="Proteomes" id="UP000006548">
    <property type="component" value="Chromosome 3"/>
</dbReference>
<dbReference type="ExpressionAtlas" id="Q9M9X7">
    <property type="expression patterns" value="baseline and differential"/>
</dbReference>
<dbReference type="GO" id="GO:0005737">
    <property type="term" value="C:cytoplasm"/>
    <property type="evidence" value="ECO:0007669"/>
    <property type="project" value="InterPro"/>
</dbReference>
<dbReference type="GO" id="GO:0005635">
    <property type="term" value="C:nuclear envelope"/>
    <property type="evidence" value="ECO:0007669"/>
    <property type="project" value="UniProtKB-SubCell"/>
</dbReference>
<dbReference type="GO" id="GO:0061608">
    <property type="term" value="F:nuclear import signal receptor activity"/>
    <property type="evidence" value="ECO:0007669"/>
    <property type="project" value="InterPro"/>
</dbReference>
<dbReference type="GO" id="GO:0006606">
    <property type="term" value="P:protein import into nucleus"/>
    <property type="evidence" value="ECO:0007669"/>
    <property type="project" value="InterPro"/>
</dbReference>
<dbReference type="FunFam" id="1.20.5.690:FF:000002">
    <property type="entry name" value="Importin subunit alpha"/>
    <property type="match status" value="1"/>
</dbReference>
<dbReference type="FunFam" id="1.25.10.10:FF:000009">
    <property type="entry name" value="Importin subunit alpha"/>
    <property type="match status" value="1"/>
</dbReference>
<dbReference type="Gene3D" id="1.20.5.690">
    <property type="entry name" value="Importin-alpha, importin-beta-binding domain"/>
    <property type="match status" value="1"/>
</dbReference>
<dbReference type="Gene3D" id="1.25.10.10">
    <property type="entry name" value="Leucine-rich Repeat Variant"/>
    <property type="match status" value="1"/>
</dbReference>
<dbReference type="InterPro" id="IPR011989">
    <property type="entry name" value="ARM-like"/>
</dbReference>
<dbReference type="InterPro" id="IPR016024">
    <property type="entry name" value="ARM-type_fold"/>
</dbReference>
<dbReference type="InterPro" id="IPR032413">
    <property type="entry name" value="Arm_3"/>
</dbReference>
<dbReference type="InterPro" id="IPR000225">
    <property type="entry name" value="Armadillo"/>
</dbReference>
<dbReference type="InterPro" id="IPR002652">
    <property type="entry name" value="Importin-a_IBB"/>
</dbReference>
<dbReference type="InterPro" id="IPR036975">
    <property type="entry name" value="Importin-a_IBB_sf"/>
</dbReference>
<dbReference type="InterPro" id="IPR024931">
    <property type="entry name" value="Importin_alpha"/>
</dbReference>
<dbReference type="PANTHER" id="PTHR23316">
    <property type="entry name" value="IMPORTIN ALPHA"/>
    <property type="match status" value="1"/>
</dbReference>
<dbReference type="Pfam" id="PF00514">
    <property type="entry name" value="Arm"/>
    <property type="match status" value="7"/>
</dbReference>
<dbReference type="Pfam" id="PF16186">
    <property type="entry name" value="Arm_3"/>
    <property type="match status" value="1"/>
</dbReference>
<dbReference type="Pfam" id="PF01749">
    <property type="entry name" value="IBB"/>
    <property type="match status" value="1"/>
</dbReference>
<dbReference type="PIRSF" id="PIRSF005673">
    <property type="entry name" value="Importin_alpha"/>
    <property type="match status" value="1"/>
</dbReference>
<dbReference type="SMART" id="SM00185">
    <property type="entry name" value="ARM"/>
    <property type="match status" value="8"/>
</dbReference>
<dbReference type="SUPFAM" id="SSF48371">
    <property type="entry name" value="ARM repeat"/>
    <property type="match status" value="1"/>
</dbReference>
<dbReference type="PROSITE" id="PS50176">
    <property type="entry name" value="ARM_REPEAT"/>
    <property type="match status" value="2"/>
</dbReference>
<dbReference type="PROSITE" id="PS51214">
    <property type="entry name" value="IBB"/>
    <property type="match status" value="1"/>
</dbReference>
<feature type="chain" id="PRO_0000431573" description="Importin subunit alpha-7">
    <location>
        <begin position="1"/>
        <end position="528"/>
    </location>
</feature>
<feature type="domain" description="IBB" evidence="3">
    <location>
        <begin position="1"/>
        <end position="56"/>
    </location>
</feature>
<feature type="repeat" description="ARM 1" evidence="2">
    <location>
        <begin position="93"/>
        <end position="133"/>
    </location>
</feature>
<feature type="repeat" description="ARM 2" evidence="2">
    <location>
        <begin position="136"/>
        <end position="175"/>
    </location>
</feature>
<feature type="repeat" description="ARM 3" evidence="2">
    <location>
        <begin position="178"/>
        <end position="218"/>
    </location>
</feature>
<feature type="repeat" description="ARM 4" evidence="2">
    <location>
        <begin position="220"/>
        <end position="259"/>
    </location>
</feature>
<feature type="repeat" description="ARM 5" evidence="2">
    <location>
        <begin position="262"/>
        <end position="301"/>
    </location>
</feature>
<feature type="repeat" description="ARM 6" evidence="2">
    <location>
        <begin position="304"/>
        <end position="344"/>
    </location>
</feature>
<feature type="repeat" description="ARM 7" evidence="2">
    <location>
        <begin position="347"/>
        <end position="386"/>
    </location>
</feature>
<feature type="repeat" description="ARM 8" evidence="2">
    <location>
        <begin position="390"/>
        <end position="429"/>
    </location>
</feature>
<name>IMPA7_ARATH</name>
<reference key="1">
    <citation type="journal article" date="2000" name="Nature">
        <title>Sequence and analysis of chromosome 3 of the plant Arabidopsis thaliana.</title>
        <authorList>
            <person name="Salanoubat M."/>
            <person name="Lemcke K."/>
            <person name="Rieger M."/>
            <person name="Ansorge W."/>
            <person name="Unseld M."/>
            <person name="Fartmann B."/>
            <person name="Valle G."/>
            <person name="Bloecker H."/>
            <person name="Perez-Alonso M."/>
            <person name="Obermaier B."/>
            <person name="Delseny M."/>
            <person name="Boutry M."/>
            <person name="Grivell L.A."/>
            <person name="Mache R."/>
            <person name="Puigdomenech P."/>
            <person name="De Simone V."/>
            <person name="Choisne N."/>
            <person name="Artiguenave F."/>
            <person name="Robert C."/>
            <person name="Brottier P."/>
            <person name="Wincker P."/>
            <person name="Cattolico L."/>
            <person name="Weissenbach J."/>
            <person name="Saurin W."/>
            <person name="Quetier F."/>
            <person name="Schaefer M."/>
            <person name="Mueller-Auer S."/>
            <person name="Gabel C."/>
            <person name="Fuchs M."/>
            <person name="Benes V."/>
            <person name="Wurmbach E."/>
            <person name="Drzonek H."/>
            <person name="Erfle H."/>
            <person name="Jordan N."/>
            <person name="Bangert S."/>
            <person name="Wiedelmann R."/>
            <person name="Kranz H."/>
            <person name="Voss H."/>
            <person name="Holland R."/>
            <person name="Brandt P."/>
            <person name="Nyakatura G."/>
            <person name="Vezzi A."/>
            <person name="D'Angelo M."/>
            <person name="Pallavicini A."/>
            <person name="Toppo S."/>
            <person name="Simionati B."/>
            <person name="Conrad A."/>
            <person name="Hornischer K."/>
            <person name="Kauer G."/>
            <person name="Loehnert T.-H."/>
            <person name="Nordsiek G."/>
            <person name="Reichelt J."/>
            <person name="Scharfe M."/>
            <person name="Schoen O."/>
            <person name="Bargues M."/>
            <person name="Terol J."/>
            <person name="Climent J."/>
            <person name="Navarro P."/>
            <person name="Collado C."/>
            <person name="Perez-Perez A."/>
            <person name="Ottenwaelder B."/>
            <person name="Duchemin D."/>
            <person name="Cooke R."/>
            <person name="Laudie M."/>
            <person name="Berger-Llauro C."/>
            <person name="Purnelle B."/>
            <person name="Masuy D."/>
            <person name="de Haan M."/>
            <person name="Maarse A.C."/>
            <person name="Alcaraz J.-P."/>
            <person name="Cottet A."/>
            <person name="Casacuberta E."/>
            <person name="Monfort A."/>
            <person name="Argiriou A."/>
            <person name="Flores M."/>
            <person name="Liguori R."/>
            <person name="Vitale D."/>
            <person name="Mannhaupt G."/>
            <person name="Haase D."/>
            <person name="Schoof H."/>
            <person name="Rudd S."/>
            <person name="Zaccaria P."/>
            <person name="Mewes H.-W."/>
            <person name="Mayer K.F.X."/>
            <person name="Kaul S."/>
            <person name="Town C.D."/>
            <person name="Koo H.L."/>
            <person name="Tallon L.J."/>
            <person name="Jenkins J."/>
            <person name="Rooney T."/>
            <person name="Rizzo M."/>
            <person name="Walts A."/>
            <person name="Utterback T."/>
            <person name="Fujii C.Y."/>
            <person name="Shea T.P."/>
            <person name="Creasy T.H."/>
            <person name="Haas B."/>
            <person name="Maiti R."/>
            <person name="Wu D."/>
            <person name="Peterson J."/>
            <person name="Van Aken S."/>
            <person name="Pai G."/>
            <person name="Militscher J."/>
            <person name="Sellers P."/>
            <person name="Gill J.E."/>
            <person name="Feldblyum T.V."/>
            <person name="Preuss D."/>
            <person name="Lin X."/>
            <person name="Nierman W.C."/>
            <person name="Salzberg S.L."/>
            <person name="White O."/>
            <person name="Venter J.C."/>
            <person name="Fraser C.M."/>
            <person name="Kaneko T."/>
            <person name="Nakamura Y."/>
            <person name="Sato S."/>
            <person name="Kato T."/>
            <person name="Asamizu E."/>
            <person name="Sasamoto S."/>
            <person name="Kimura T."/>
            <person name="Idesawa K."/>
            <person name="Kawashima K."/>
            <person name="Kishida Y."/>
            <person name="Kiyokawa C."/>
            <person name="Kohara M."/>
            <person name="Matsumoto M."/>
            <person name="Matsuno A."/>
            <person name="Muraki A."/>
            <person name="Nakayama S."/>
            <person name="Nakazaki N."/>
            <person name="Shinpo S."/>
            <person name="Takeuchi C."/>
            <person name="Wada T."/>
            <person name="Watanabe A."/>
            <person name="Yamada M."/>
            <person name="Yasuda M."/>
            <person name="Tabata S."/>
        </authorList>
    </citation>
    <scope>NUCLEOTIDE SEQUENCE [LARGE SCALE GENOMIC DNA]</scope>
    <scope>GENOME REANNOTATION</scope>
    <source>
        <strain>cv. Columbia</strain>
    </source>
</reference>
<reference key="2">
    <citation type="journal article" date="2017" name="Plant J.">
        <title>Araport11: a complete reannotation of the Arabidopsis thaliana reference genome.</title>
        <authorList>
            <person name="Cheng C.Y."/>
            <person name="Krishnakumar V."/>
            <person name="Chan A.P."/>
            <person name="Thibaud-Nissen F."/>
            <person name="Schobel S."/>
            <person name="Town C.D."/>
        </authorList>
    </citation>
    <scope>GENOME REANNOTATION</scope>
    <source>
        <strain>cv. Columbia</strain>
    </source>
</reference>
<reference key="3">
    <citation type="journal article" date="2006" name="Plant Biotechnol. J.">
        <title>Simultaneous high-throughput recombinational cloning of open reading frames in closed and open configurations.</title>
        <authorList>
            <person name="Underwood B.A."/>
            <person name="Vanderhaeghen R."/>
            <person name="Whitford R."/>
            <person name="Town C.D."/>
            <person name="Hilson P."/>
        </authorList>
    </citation>
    <scope>NUCLEOTIDE SEQUENCE [LARGE SCALE MRNA]</scope>
    <source>
        <strain>cv. Columbia</strain>
    </source>
</reference>
<reference key="4">
    <citation type="journal article" date="2008" name="Plant Cell">
        <title>IMPa-4, an Arabidopsis importin alpha isoform, is preferentially involved in agrobacterium-mediated plant transformation.</title>
        <authorList>
            <person name="Bhattacharjee S."/>
            <person name="Lee L.Y."/>
            <person name="Oltmanns H."/>
            <person name="Cao H."/>
            <person name="Gupta V."/>
            <person name="Cuperus J."/>
            <person name="Gelvin S.B."/>
        </authorList>
    </citation>
    <scope>FUNCTION</scope>
    <scope>GENE FAMILY</scope>
</reference>
<organism>
    <name type="scientific">Arabidopsis thaliana</name>
    <name type="common">Mouse-ear cress</name>
    <dbReference type="NCBI Taxonomy" id="3702"/>
    <lineage>
        <taxon>Eukaryota</taxon>
        <taxon>Viridiplantae</taxon>
        <taxon>Streptophyta</taxon>
        <taxon>Embryophyta</taxon>
        <taxon>Tracheophyta</taxon>
        <taxon>Spermatophyta</taxon>
        <taxon>Magnoliopsida</taxon>
        <taxon>eudicotyledons</taxon>
        <taxon>Gunneridae</taxon>
        <taxon>Pentapetalae</taxon>
        <taxon>rosids</taxon>
        <taxon>malvids</taxon>
        <taxon>Brassicales</taxon>
        <taxon>Brassicaceae</taxon>
        <taxon>Camelineae</taxon>
        <taxon>Arabidopsis</taxon>
    </lineage>
</organism>
<sequence>MKGGETMSVRRSGYKAVVDGVGGRRRREDDMVEIRKAKREESLLKKRREALPHSPSADSLDQKLISCIWSDERDLLIEATTQIRTLLCGEMFNVRVEEVIQAGLVPRFVEFLTWDDSPQLQFEAAWALTNIASGTSENTEVVIDHGAVAILVRLLNSPYDVVREQVVWALGNISGDSPRCRDIVLGHAALPSLLLQLNHGAKLSMLVNAAWTLSNLCRGKPQPPFDQVSAALPALAQLIRLDDKELLAYTCWALVYLSDGSNEKIQAVIEANVCARLIGLSIHRSPSVITPALRTIGNIVTGNDSQTQHIIDLQALPCLVNLLRGSYNKTIRKEACWTVSNITAGCQSQIQAVFDADICPALVNLLQNSEGDVKKEAAWAICNAIAGGSYKQIMFLVKQECIKPLCDLLTCSDTQLVMVCLEALKKILKVGEVFSSRHAEGIYQCPQTNVNPHAQLIEEAEGLEKIEGLQSHENNDIYETAVKILETYWMEEEEEEDQEQQDMIYFPVDNFANMPTSSGTLSEMHCGP</sequence>
<proteinExistence type="evidence at transcript level"/>
<accession>Q9M9X7</accession>
<keyword id="KW-0539">Nucleus</keyword>
<keyword id="KW-0653">Protein transport</keyword>
<keyword id="KW-1185">Reference proteome</keyword>
<keyword id="KW-0677">Repeat</keyword>
<keyword id="KW-0813">Transport</keyword>
<gene>
    <name evidence="5" type="primary">IMPA7</name>
    <name evidence="7" type="ordered locus">At3g05720</name>
    <name evidence="8" type="ORF">F18C1.1</name>
</gene>
<comment type="function">
    <text evidence="1 4">Binds to conventional NLS motifs and mediates nuclear protein import across the nuclear envelope (By similarity). Acts as a cellular receptor for the nuclear import of the virD2 protein of Agrobacterium, but is not essential for Agrobacterium-mediated root transformation (PubMed:18836040).</text>
</comment>
<comment type="subunit">
    <text evidence="1">Forms a complex with importin subunit beta-1.</text>
</comment>
<comment type="subcellular location">
    <subcellularLocation>
        <location evidence="1">Nucleus envelope</location>
    </subcellularLocation>
</comment>
<comment type="similarity">
    <text evidence="6">Belongs to the importin alpha family.</text>
</comment>
<evidence type="ECO:0000250" key="1">
    <source>
        <dbReference type="UniProtKB" id="Q96321"/>
    </source>
</evidence>
<evidence type="ECO:0000255" key="2"/>
<evidence type="ECO:0000255" key="3">
    <source>
        <dbReference type="PROSITE-ProRule" id="PRU00561"/>
    </source>
</evidence>
<evidence type="ECO:0000269" key="4">
    <source>
    </source>
</evidence>
<evidence type="ECO:0000303" key="5">
    <source>
    </source>
</evidence>
<evidence type="ECO:0000305" key="6"/>
<evidence type="ECO:0000312" key="7">
    <source>
        <dbReference type="Araport" id="AT3G05720"/>
    </source>
</evidence>
<evidence type="ECO:0000312" key="8">
    <source>
        <dbReference type="EMBL" id="AAF26125.1"/>
    </source>
</evidence>